<organism>
    <name type="scientific">Geotalea daltonii (strain DSM 22248 / JCM 15807 / FRC-32)</name>
    <name type="common">Geobacter daltonii</name>
    <dbReference type="NCBI Taxonomy" id="316067"/>
    <lineage>
        <taxon>Bacteria</taxon>
        <taxon>Pseudomonadati</taxon>
        <taxon>Thermodesulfobacteriota</taxon>
        <taxon>Desulfuromonadia</taxon>
        <taxon>Geobacterales</taxon>
        <taxon>Geobacteraceae</taxon>
        <taxon>Geotalea</taxon>
    </lineage>
</organism>
<reference key="1">
    <citation type="submission" date="2009-01" db="EMBL/GenBank/DDBJ databases">
        <title>Complete sequence of Geobacter sp. FRC-32.</title>
        <authorList>
            <consortium name="US DOE Joint Genome Institute"/>
            <person name="Lucas S."/>
            <person name="Copeland A."/>
            <person name="Lapidus A."/>
            <person name="Glavina del Rio T."/>
            <person name="Dalin E."/>
            <person name="Tice H."/>
            <person name="Bruce D."/>
            <person name="Goodwin L."/>
            <person name="Pitluck S."/>
            <person name="Saunders E."/>
            <person name="Brettin T."/>
            <person name="Detter J.C."/>
            <person name="Han C."/>
            <person name="Larimer F."/>
            <person name="Land M."/>
            <person name="Hauser L."/>
            <person name="Kyrpides N."/>
            <person name="Ovchinnikova G."/>
            <person name="Kostka J."/>
            <person name="Richardson P."/>
        </authorList>
    </citation>
    <scope>NUCLEOTIDE SEQUENCE [LARGE SCALE GENOMIC DNA]</scope>
    <source>
        <strain>DSM 22248 / JCM 15807 / FRC-32</strain>
    </source>
</reference>
<sequence length="85" mass="9295">MAHKKGVGSSRNGRDSDGQRLGCKKFGGEHVKAGNIIYRQHGTKIHPGNNVGLGKDYTLFALIEGVVKFERLGRDRKKVSVYPAS</sequence>
<accession>B9M3W2</accession>
<evidence type="ECO:0000255" key="1">
    <source>
        <dbReference type="HAMAP-Rule" id="MF_00539"/>
    </source>
</evidence>
<evidence type="ECO:0000256" key="2">
    <source>
        <dbReference type="SAM" id="MobiDB-lite"/>
    </source>
</evidence>
<evidence type="ECO:0000305" key="3"/>
<feature type="chain" id="PRO_1000146532" description="Large ribosomal subunit protein bL27">
    <location>
        <begin position="1"/>
        <end position="85"/>
    </location>
</feature>
<feature type="region of interest" description="Disordered" evidence="2">
    <location>
        <begin position="1"/>
        <end position="24"/>
    </location>
</feature>
<dbReference type="EMBL" id="CP001390">
    <property type="protein sequence ID" value="ACM19605.1"/>
    <property type="molecule type" value="Genomic_DNA"/>
</dbReference>
<dbReference type="RefSeq" id="WP_012646334.1">
    <property type="nucleotide sequence ID" value="NC_011979.1"/>
</dbReference>
<dbReference type="SMR" id="B9M3W2"/>
<dbReference type="STRING" id="316067.Geob_1245"/>
<dbReference type="KEGG" id="geo:Geob_1245"/>
<dbReference type="eggNOG" id="COG0211">
    <property type="taxonomic scope" value="Bacteria"/>
</dbReference>
<dbReference type="HOGENOM" id="CLU_095424_4_0_7"/>
<dbReference type="OrthoDB" id="9803474at2"/>
<dbReference type="Proteomes" id="UP000007721">
    <property type="component" value="Chromosome"/>
</dbReference>
<dbReference type="GO" id="GO:0022625">
    <property type="term" value="C:cytosolic large ribosomal subunit"/>
    <property type="evidence" value="ECO:0007669"/>
    <property type="project" value="TreeGrafter"/>
</dbReference>
<dbReference type="GO" id="GO:0003735">
    <property type="term" value="F:structural constituent of ribosome"/>
    <property type="evidence" value="ECO:0007669"/>
    <property type="project" value="InterPro"/>
</dbReference>
<dbReference type="GO" id="GO:0006412">
    <property type="term" value="P:translation"/>
    <property type="evidence" value="ECO:0007669"/>
    <property type="project" value="UniProtKB-UniRule"/>
</dbReference>
<dbReference type="FunFam" id="2.40.50.100:FF:000004">
    <property type="entry name" value="50S ribosomal protein L27"/>
    <property type="match status" value="1"/>
</dbReference>
<dbReference type="Gene3D" id="2.40.50.100">
    <property type="match status" value="1"/>
</dbReference>
<dbReference type="HAMAP" id="MF_00539">
    <property type="entry name" value="Ribosomal_bL27"/>
    <property type="match status" value="1"/>
</dbReference>
<dbReference type="InterPro" id="IPR001684">
    <property type="entry name" value="Ribosomal_bL27"/>
</dbReference>
<dbReference type="NCBIfam" id="TIGR00062">
    <property type="entry name" value="L27"/>
    <property type="match status" value="1"/>
</dbReference>
<dbReference type="PANTHER" id="PTHR15893:SF0">
    <property type="entry name" value="LARGE RIBOSOMAL SUBUNIT PROTEIN BL27M"/>
    <property type="match status" value="1"/>
</dbReference>
<dbReference type="PANTHER" id="PTHR15893">
    <property type="entry name" value="RIBOSOMAL PROTEIN L27"/>
    <property type="match status" value="1"/>
</dbReference>
<dbReference type="Pfam" id="PF01016">
    <property type="entry name" value="Ribosomal_L27"/>
    <property type="match status" value="1"/>
</dbReference>
<dbReference type="PRINTS" id="PR00063">
    <property type="entry name" value="RIBOSOMALL27"/>
</dbReference>
<dbReference type="SUPFAM" id="SSF110324">
    <property type="entry name" value="Ribosomal L27 protein-like"/>
    <property type="match status" value="1"/>
</dbReference>
<proteinExistence type="inferred from homology"/>
<protein>
    <recommendedName>
        <fullName evidence="1">Large ribosomal subunit protein bL27</fullName>
    </recommendedName>
    <alternativeName>
        <fullName evidence="3">50S ribosomal protein L27</fullName>
    </alternativeName>
</protein>
<keyword id="KW-1185">Reference proteome</keyword>
<keyword id="KW-0687">Ribonucleoprotein</keyword>
<keyword id="KW-0689">Ribosomal protein</keyword>
<gene>
    <name evidence="1" type="primary">rpmA</name>
    <name type="ordered locus">Geob_1245</name>
</gene>
<name>RL27_GEODF</name>
<comment type="similarity">
    <text evidence="1">Belongs to the bacterial ribosomal protein bL27 family.</text>
</comment>